<reference key="1">
    <citation type="journal article" date="2008" name="J. Biol. Chem.">
        <title>Neuronally mu-conotoxins from Conus striatus utilize an alpha-helical motif to target mammalian sodium channels.</title>
        <authorList>
            <person name="Schroeder C.I."/>
            <person name="Ekberg J."/>
            <person name="Nielsen K.J."/>
            <person name="Adams D."/>
            <person name="Loughnan M.L."/>
            <person name="Thomas L."/>
            <person name="Adams D.J."/>
            <person name="Alewood P.F."/>
            <person name="Lewis R.J."/>
        </authorList>
    </citation>
    <scope>PROTEIN SEQUENCE</scope>
    <scope>SYNTHESIS</scope>
    <scope>FUNCTION</scope>
    <scope>MASS SPECTROMETRY</scope>
    <scope>PYROGLUTAMATE FORMATION AT GLN-1</scope>
    <scope>AMIDATION AT CYS-20</scope>
    <scope>MUTAGENESIS OF GLN-1</scope>
    <scope>SUBCELLULAR LOCATION</scope>
    <source>
        <tissue>Venom</tissue>
    </source>
</reference>
<reference key="2">
    <citation type="journal article" date="2012" name="Biopolymers">
        <title>N- and C-terminal extensions of mu-conotoxins increase potency and selectivity for neuronal sodium channels.</title>
        <authorList>
            <person name="Schroeder C.I."/>
            <person name="Adams D."/>
            <person name="Thomas L."/>
            <person name="Alewood P.F."/>
            <person name="Lewis R.J."/>
        </authorList>
    </citation>
    <scope>MUTAGENESIS OF GLN-1 AND 1-GLN-ASN-2</scope>
    <scope>SYNTHESIS</scope>
</reference>
<dbReference type="ConoServer" id="1615">
    <property type="toxin name" value="SIIIB"/>
</dbReference>
<dbReference type="GO" id="GO:0005576">
    <property type="term" value="C:extracellular region"/>
    <property type="evidence" value="ECO:0007669"/>
    <property type="project" value="UniProtKB-SubCell"/>
</dbReference>
<dbReference type="GO" id="GO:0017080">
    <property type="term" value="F:sodium channel regulator activity"/>
    <property type="evidence" value="ECO:0007669"/>
    <property type="project" value="UniProtKB-KW"/>
</dbReference>
<dbReference type="GO" id="GO:0090729">
    <property type="term" value="F:toxin activity"/>
    <property type="evidence" value="ECO:0007669"/>
    <property type="project" value="UniProtKB-KW"/>
</dbReference>
<organism>
    <name type="scientific">Conus striatus</name>
    <name type="common">Striated cone</name>
    <dbReference type="NCBI Taxonomy" id="6493"/>
    <lineage>
        <taxon>Eukaryota</taxon>
        <taxon>Metazoa</taxon>
        <taxon>Spiralia</taxon>
        <taxon>Lophotrochozoa</taxon>
        <taxon>Mollusca</taxon>
        <taxon>Gastropoda</taxon>
        <taxon>Caenogastropoda</taxon>
        <taxon>Neogastropoda</taxon>
        <taxon>Conoidea</taxon>
        <taxon>Conidae</taxon>
        <taxon>Conus</taxon>
        <taxon>Pionoconus</taxon>
    </lineage>
</organism>
<accession>P0CE77</accession>
<name>CM3B_CONST</name>
<evidence type="ECO:0000250" key="1">
    <source>
        <dbReference type="UniProtKB" id="Q86DU6"/>
    </source>
</evidence>
<evidence type="ECO:0000269" key="2">
    <source>
    </source>
</evidence>
<evidence type="ECO:0000269" key="3">
    <source>
    </source>
</evidence>
<evidence type="ECO:0000303" key="4">
    <source>
    </source>
</evidence>
<evidence type="ECO:0000305" key="5"/>
<evidence type="ECO:0000305" key="6">
    <source>
    </source>
</evidence>
<sequence length="20" mass="2145">QNCCNGGCSSKWCKGHARCC</sequence>
<feature type="peptide" id="PRO_0000392728" description="Mu-conotoxin SIIIB" evidence="2">
    <location>
        <begin position="1"/>
        <end position="20"/>
    </location>
</feature>
<feature type="modified residue" description="Pyrrolidone carboxylic acid" evidence="2">
    <location>
        <position position="1"/>
    </location>
</feature>
<feature type="modified residue" description="Cysteine amide" evidence="2">
    <location>
        <position position="20"/>
    </location>
</feature>
<feature type="disulfide bond" evidence="1">
    <location>
        <begin position="3"/>
        <end position="13"/>
    </location>
</feature>
<feature type="disulfide bond" evidence="1">
    <location>
        <begin position="4"/>
        <end position="19"/>
    </location>
</feature>
<feature type="disulfide bond" evidence="1">
    <location>
        <begin position="8"/>
        <end position="20"/>
    </location>
</feature>
<feature type="mutagenesis site" description="Slight decrease in affinity to Nav1.2/SCN2A and decrease in affinity to Nav1.4/SCN4A ([N2E]SIIIB(2-20))." evidence="3">
    <original>QN</original>
    <variation>E</variation>
    <location>
        <begin position="1"/>
        <end position="2"/>
    </location>
</feature>
<feature type="mutagenesis site" description="Decrease of affinity to Nav1.2/SCN2A and important decrease to Nav1.4/SCN4A with shift of selectivity in favor of Nav1.2/SCN2A." evidence="2 3">
    <original>Q</original>
    <variation>E</variation>
    <location>
        <position position="1"/>
    </location>
</feature>
<feature type="mutagenesis site" description="Slight increase of selectivity to Nav1.2/SCN2A and slight decrease of affinity to Nav1.4/SCN4A." evidence="2 3">
    <original>Q</original>
    <variation>ER</variation>
    <location>
        <position position="1"/>
    </location>
</feature>
<feature type="mutagenesis site" description="Slight increase of affinity to Nav1.2/SCN2A and slight decrease of affinity to Nav1.4/SCN4A." evidence="2 3">
    <original>Q</original>
    <variation>R</variation>
    <location>
        <position position="1"/>
    </location>
</feature>
<feature type="mutagenesis site" description="Increase of affinity to both Nav1.2/SCN2A and Nav1.4/SCN4A." evidence="2 3">
    <location>
        <position position="1"/>
    </location>
</feature>
<protein>
    <recommendedName>
        <fullName evidence="4">Mu-conotoxin SIIIB</fullName>
    </recommendedName>
</protein>
<keyword id="KW-0027">Amidation</keyword>
<keyword id="KW-0903">Direct protein sequencing</keyword>
<keyword id="KW-1015">Disulfide bond</keyword>
<keyword id="KW-0872">Ion channel impairing toxin</keyword>
<keyword id="KW-0528">Neurotoxin</keyword>
<keyword id="KW-0873">Pyrrolidone carboxylic acid</keyword>
<keyword id="KW-0964">Secreted</keyword>
<keyword id="KW-0800">Toxin</keyword>
<keyword id="KW-0738">Voltage-gated sodium channel impairing toxin</keyword>
<comment type="function">
    <text evidence="2">Mu-conotoxins block voltage-gated sodium channels (VGSC). Potently displaces (125)I-TIIIA from native rat brain Nav1.2/SCN2A (IC(50) is 5 nM) and muscle Nav1.4/SCN4A (IC(50) is 3 nM) VGSCs. Potently and irreversibly inhibits current through Xenopus oocyte-expressed Nav1.2/SCN2A and Nav1.4/SCN4A.</text>
</comment>
<comment type="subcellular location">
    <subcellularLocation>
        <location evidence="2">Secreted</location>
    </subcellularLocation>
</comment>
<comment type="tissue specificity">
    <text evidence="6">Expressed by the venom duct.</text>
</comment>
<comment type="domain">
    <text evidence="5">The cysteine framework is III (CC-C-C-CC). Classified in the M-5 branch, since 5 residues stand between the fourth and the fifth cysteine residues.</text>
</comment>
<comment type="mass spectrometry" mass="2120.7" method="Electrospray" evidence="2"/>
<comment type="similarity">
    <text evidence="5">Belongs to the conotoxin M superfamily.</text>
</comment>
<proteinExistence type="evidence at protein level"/>